<protein>
    <recommendedName>
        <fullName evidence="1">Small ribosomal subunit protein uS9</fullName>
    </recommendedName>
    <alternativeName>
        <fullName evidence="2">30S ribosomal protein S9</fullName>
    </alternativeName>
</protein>
<name>RS9_STRGG</name>
<reference key="1">
    <citation type="journal article" date="2008" name="J. Bacteriol.">
        <title>Genome sequence of the streptomycin-producing microorganism Streptomyces griseus IFO 13350.</title>
        <authorList>
            <person name="Ohnishi Y."/>
            <person name="Ishikawa J."/>
            <person name="Hara H."/>
            <person name="Suzuki H."/>
            <person name="Ikenoya M."/>
            <person name="Ikeda H."/>
            <person name="Yamashita A."/>
            <person name="Hattori M."/>
            <person name="Horinouchi S."/>
        </authorList>
    </citation>
    <scope>NUCLEOTIDE SEQUENCE [LARGE SCALE GENOMIC DNA]</scope>
    <source>
        <strain>JCM 4626 / CBS 651.72 / NBRC 13350 / KCC S-0626 / ISP 5235</strain>
    </source>
</reference>
<sequence>MAETTVETPVEGTEGEETFAEVTTFESEVPVEGEYTSESLAGRFGDPQPAAGLGRRKNAIARVRIVPGTGKWKINGRTLEDYFPNKVHQQEVNEPFKVLELDGRYDVIARISGGGVSGQAGALRLGVARSLNEADVDNNRATLKKAGFLSRDDRAVERKKAGLKKARKAPQYSKR</sequence>
<keyword id="KW-0687">Ribonucleoprotein</keyword>
<keyword id="KW-0689">Ribosomal protein</keyword>
<proteinExistence type="inferred from homology"/>
<gene>
    <name evidence="1" type="primary">rpsI</name>
    <name type="ordered locus">SGR_2801</name>
</gene>
<organism>
    <name type="scientific">Streptomyces griseus subsp. griseus (strain JCM 4626 / CBS 651.72 / NBRC 13350 / KCC S-0626 / ISP 5235)</name>
    <dbReference type="NCBI Taxonomy" id="455632"/>
    <lineage>
        <taxon>Bacteria</taxon>
        <taxon>Bacillati</taxon>
        <taxon>Actinomycetota</taxon>
        <taxon>Actinomycetes</taxon>
        <taxon>Kitasatosporales</taxon>
        <taxon>Streptomycetaceae</taxon>
        <taxon>Streptomyces</taxon>
    </lineage>
</organism>
<accession>B1W3X4</accession>
<evidence type="ECO:0000255" key="1">
    <source>
        <dbReference type="HAMAP-Rule" id="MF_00532"/>
    </source>
</evidence>
<evidence type="ECO:0000305" key="2"/>
<comment type="similarity">
    <text evidence="1">Belongs to the universal ribosomal protein uS9 family.</text>
</comment>
<dbReference type="EMBL" id="AP009493">
    <property type="protein sequence ID" value="BAG19630.1"/>
    <property type="molecule type" value="Genomic_DNA"/>
</dbReference>
<dbReference type="RefSeq" id="WP_003966931.1">
    <property type="nucleotide sequence ID" value="NC_010572.1"/>
</dbReference>
<dbReference type="SMR" id="B1W3X4"/>
<dbReference type="KEGG" id="sgr:SGR_2801"/>
<dbReference type="eggNOG" id="COG0103">
    <property type="taxonomic scope" value="Bacteria"/>
</dbReference>
<dbReference type="HOGENOM" id="CLU_046483_2_0_11"/>
<dbReference type="Proteomes" id="UP000001685">
    <property type="component" value="Chromosome"/>
</dbReference>
<dbReference type="GO" id="GO:0005737">
    <property type="term" value="C:cytoplasm"/>
    <property type="evidence" value="ECO:0007669"/>
    <property type="project" value="UniProtKB-ARBA"/>
</dbReference>
<dbReference type="GO" id="GO:0015935">
    <property type="term" value="C:small ribosomal subunit"/>
    <property type="evidence" value="ECO:0007669"/>
    <property type="project" value="TreeGrafter"/>
</dbReference>
<dbReference type="GO" id="GO:0003723">
    <property type="term" value="F:RNA binding"/>
    <property type="evidence" value="ECO:0007669"/>
    <property type="project" value="TreeGrafter"/>
</dbReference>
<dbReference type="GO" id="GO:0003735">
    <property type="term" value="F:structural constituent of ribosome"/>
    <property type="evidence" value="ECO:0007669"/>
    <property type="project" value="InterPro"/>
</dbReference>
<dbReference type="GO" id="GO:0006412">
    <property type="term" value="P:translation"/>
    <property type="evidence" value="ECO:0007669"/>
    <property type="project" value="UniProtKB-UniRule"/>
</dbReference>
<dbReference type="FunFam" id="3.30.230.10:FF:000001">
    <property type="entry name" value="30S ribosomal protein S9"/>
    <property type="match status" value="1"/>
</dbReference>
<dbReference type="Gene3D" id="3.30.230.10">
    <property type="match status" value="1"/>
</dbReference>
<dbReference type="HAMAP" id="MF_00532_B">
    <property type="entry name" value="Ribosomal_uS9_B"/>
    <property type="match status" value="1"/>
</dbReference>
<dbReference type="InterPro" id="IPR020568">
    <property type="entry name" value="Ribosomal_Su5_D2-typ_SF"/>
</dbReference>
<dbReference type="InterPro" id="IPR000754">
    <property type="entry name" value="Ribosomal_uS9"/>
</dbReference>
<dbReference type="InterPro" id="IPR023035">
    <property type="entry name" value="Ribosomal_uS9_bac/plastid"/>
</dbReference>
<dbReference type="InterPro" id="IPR020574">
    <property type="entry name" value="Ribosomal_uS9_CS"/>
</dbReference>
<dbReference type="InterPro" id="IPR014721">
    <property type="entry name" value="Ribsml_uS5_D2-typ_fold_subgr"/>
</dbReference>
<dbReference type="NCBIfam" id="NF001099">
    <property type="entry name" value="PRK00132.1"/>
    <property type="match status" value="1"/>
</dbReference>
<dbReference type="PANTHER" id="PTHR21569">
    <property type="entry name" value="RIBOSOMAL PROTEIN S9"/>
    <property type="match status" value="1"/>
</dbReference>
<dbReference type="PANTHER" id="PTHR21569:SF1">
    <property type="entry name" value="SMALL RIBOSOMAL SUBUNIT PROTEIN US9M"/>
    <property type="match status" value="1"/>
</dbReference>
<dbReference type="Pfam" id="PF00380">
    <property type="entry name" value="Ribosomal_S9"/>
    <property type="match status" value="1"/>
</dbReference>
<dbReference type="SUPFAM" id="SSF54211">
    <property type="entry name" value="Ribosomal protein S5 domain 2-like"/>
    <property type="match status" value="1"/>
</dbReference>
<dbReference type="PROSITE" id="PS00360">
    <property type="entry name" value="RIBOSOMAL_S9"/>
    <property type="match status" value="1"/>
</dbReference>
<feature type="chain" id="PRO_1000128178" description="Small ribosomal subunit protein uS9">
    <location>
        <begin position="1"/>
        <end position="175"/>
    </location>
</feature>